<accession>A8X9V4</accession>
<protein>
    <recommendedName>
        <fullName>Tubulin polyglutamylase ttll-4</fullName>
        <ecNumber evidence="2">6.3.2.-</ecNumber>
    </recommendedName>
    <alternativeName>
        <fullName evidence="2">Tubulin--tyrosine ligase-like protein 4</fullName>
    </alternativeName>
</protein>
<dbReference type="EC" id="6.3.2.-" evidence="2"/>
<dbReference type="EMBL" id="HE601459">
    <property type="protein sequence ID" value="CAP29419.1"/>
    <property type="molecule type" value="Genomic_DNA"/>
</dbReference>
<dbReference type="SMR" id="A8X9V4"/>
<dbReference type="FunCoup" id="A8X9V4">
    <property type="interactions" value="1171"/>
</dbReference>
<dbReference type="STRING" id="6238.A8X9V4"/>
<dbReference type="EnsemblMetazoa" id="CBG09874.1">
    <property type="protein sequence ID" value="CBG09874.1"/>
    <property type="gene ID" value="WBGene00031388"/>
</dbReference>
<dbReference type="KEGG" id="cbr:CBG_09874"/>
<dbReference type="CTD" id="8583564"/>
<dbReference type="WormBase" id="CBG09874">
    <property type="protein sequence ID" value="CBP02521"/>
    <property type="gene ID" value="WBGene00031388"/>
    <property type="gene designation" value="Cbr-ttll-4"/>
</dbReference>
<dbReference type="eggNOG" id="KOG2156">
    <property type="taxonomic scope" value="Eukaryota"/>
</dbReference>
<dbReference type="HOGENOM" id="CLU_010131_8_1_1"/>
<dbReference type="InParanoid" id="A8X9V4"/>
<dbReference type="OMA" id="FWIGYWG"/>
<dbReference type="Proteomes" id="UP000008549">
    <property type="component" value="Unassembled WGS sequence"/>
</dbReference>
<dbReference type="GO" id="GO:0036064">
    <property type="term" value="C:ciliary basal body"/>
    <property type="evidence" value="ECO:0000318"/>
    <property type="project" value="GO_Central"/>
</dbReference>
<dbReference type="GO" id="GO:0005524">
    <property type="term" value="F:ATP binding"/>
    <property type="evidence" value="ECO:0007669"/>
    <property type="project" value="UniProtKB-KW"/>
</dbReference>
<dbReference type="GO" id="GO:0046872">
    <property type="term" value="F:metal ion binding"/>
    <property type="evidence" value="ECO:0007669"/>
    <property type="project" value="UniProtKB-KW"/>
</dbReference>
<dbReference type="GO" id="GO:0070739">
    <property type="term" value="F:protein-glutamic acid ligase activity"/>
    <property type="evidence" value="ECO:0000250"/>
    <property type="project" value="UniProtKB"/>
</dbReference>
<dbReference type="GO" id="GO:0106437">
    <property type="term" value="F:protein-glutamic acid ligase activity, initiating"/>
    <property type="evidence" value="ECO:0007669"/>
    <property type="project" value="RHEA"/>
</dbReference>
<dbReference type="GO" id="GO:0015631">
    <property type="term" value="F:tubulin binding"/>
    <property type="evidence" value="ECO:0000318"/>
    <property type="project" value="GO_Central"/>
</dbReference>
<dbReference type="GO" id="GO:0070740">
    <property type="term" value="F:tubulin-glutamic acid ligase activity"/>
    <property type="evidence" value="ECO:0000250"/>
    <property type="project" value="UniProtKB"/>
</dbReference>
<dbReference type="GO" id="GO:0000226">
    <property type="term" value="P:microtubule cytoskeleton organization"/>
    <property type="evidence" value="ECO:0000318"/>
    <property type="project" value="GO_Central"/>
</dbReference>
<dbReference type="GO" id="GO:0036211">
    <property type="term" value="P:protein modification process"/>
    <property type="evidence" value="ECO:0007669"/>
    <property type="project" value="InterPro"/>
</dbReference>
<dbReference type="GO" id="GO:0034606">
    <property type="term" value="P:response to hermaphrodite contact"/>
    <property type="evidence" value="ECO:0007669"/>
    <property type="project" value="EnsemblMetazoa"/>
</dbReference>
<dbReference type="FunFam" id="3.30.470.20:FF:000116">
    <property type="entry name" value="Tubulin polyglutamylase ttll-4"/>
    <property type="match status" value="1"/>
</dbReference>
<dbReference type="Gene3D" id="3.30.470.20">
    <property type="entry name" value="ATP-grasp fold, B domain"/>
    <property type="match status" value="1"/>
</dbReference>
<dbReference type="InterPro" id="IPR011761">
    <property type="entry name" value="ATP-grasp"/>
</dbReference>
<dbReference type="InterPro" id="IPR004344">
    <property type="entry name" value="TTL/TTLL_fam"/>
</dbReference>
<dbReference type="PANTHER" id="PTHR12241:SF162">
    <property type="entry name" value="TUBULIN MONOGLUTAMYLASE TTLL4"/>
    <property type="match status" value="1"/>
</dbReference>
<dbReference type="PANTHER" id="PTHR12241">
    <property type="entry name" value="TUBULIN POLYGLUTAMYLASE"/>
    <property type="match status" value="1"/>
</dbReference>
<dbReference type="Pfam" id="PF03133">
    <property type="entry name" value="TTL"/>
    <property type="match status" value="1"/>
</dbReference>
<dbReference type="SUPFAM" id="SSF56059">
    <property type="entry name" value="Glutathione synthetase ATP-binding domain-like"/>
    <property type="match status" value="1"/>
</dbReference>
<dbReference type="PROSITE" id="PS51221">
    <property type="entry name" value="TTL"/>
    <property type="match status" value="1"/>
</dbReference>
<gene>
    <name type="primary">ttll-4</name>
    <name type="ORF">CBG09874</name>
</gene>
<proteinExistence type="inferred from homology"/>
<sequence length="597" mass="68666">MSSGYSSAPSVSHTSSEADLNRIESYEDGVDEEASDEQRMCGLSELVTSCLTSSKSSRQKDSFEDDDDVPIEIVGTLKKSKSKKKKQCPPNITIEKKNGNSSPFLKSSQFTDVPPTIRFYTKGTKVTKPARKIQSRLTWCHNSLLPIVMRQTLSASHFTIVDESLFHIGYWGRHLKSAQYKALQPHQKVNHFPGAFHIGRKDRLWMHIRNRLEHFGEEFEIMPFTYILPTDRQELLKYLETDVNRHVIIKPPASARGSGITVTRKPKDFPTTATLVAQHYIERPLTINRAKFDLRLYAYVPTFEPLRVYIYDQGLVRFASVPYNPSVTNISNKYMHLTNYSINKLAEADGIANKPVPKWALHQLWDYFDQMGVNSQKIQKEIEDVIVKAFISCEKPIREHMSRFLEQEFICYELFGIDIILDEDYKPWLLEVNISPSLHSGTSLDVSVKAPLAKDVLNLAGIHVPPSFDKLHTADYSCRPRNGTKTREQLVKEASWVAAYRDQHGAIDNRIFKRLTPEDTRALVEFEDELDRIGDFKLVFPTAQTAHYQKFFAEPIYMNILLQQWQIAQEGDRSIGIDRLEQLCRQKHMQSDQEISF</sequence>
<comment type="function">
    <text evidence="2">Monoglutamylase which modifies tubulin, adding a single glutamate on the gamma-carboxyl group of specific glutamate residues of target proteins. Involved in the side-chain initiation step of the polyglutamylation reaction but not in the elongation step. Preferentially modifies beta-tail tubulin over the alpha-tubulin. Involved in side-chain glutamylation of tubulin in sensory cilia. Together with ttll-5 and ttll-11, required for male mating.</text>
</comment>
<comment type="catalytic activity">
    <reaction evidence="2">
        <text>L-glutamyl-[protein] + L-glutamate + ATP = gamma-L-glutamyl-L-glutamyl-[protein] + ADP + phosphate + H(+)</text>
        <dbReference type="Rhea" id="RHEA:60144"/>
        <dbReference type="Rhea" id="RHEA-COMP:10208"/>
        <dbReference type="Rhea" id="RHEA-COMP:15517"/>
        <dbReference type="ChEBI" id="CHEBI:15378"/>
        <dbReference type="ChEBI" id="CHEBI:29973"/>
        <dbReference type="ChEBI" id="CHEBI:29985"/>
        <dbReference type="ChEBI" id="CHEBI:30616"/>
        <dbReference type="ChEBI" id="CHEBI:43474"/>
        <dbReference type="ChEBI" id="CHEBI:143622"/>
        <dbReference type="ChEBI" id="CHEBI:456216"/>
    </reaction>
    <physiologicalReaction direction="left-to-right" evidence="2">
        <dbReference type="Rhea" id="RHEA:60145"/>
    </physiologicalReaction>
</comment>
<comment type="cofactor">
    <cofactor evidence="1">
        <name>Mg(2+)</name>
        <dbReference type="ChEBI" id="CHEBI:18420"/>
    </cofactor>
</comment>
<comment type="similarity">
    <text evidence="5">Belongs to the tubulin--tyrosine ligase family.</text>
</comment>
<keyword id="KW-0067">ATP-binding</keyword>
<keyword id="KW-0436">Ligase</keyword>
<keyword id="KW-0460">Magnesium</keyword>
<keyword id="KW-0479">Metal-binding</keyword>
<keyword id="KW-0547">Nucleotide-binding</keyword>
<keyword id="KW-1185">Reference proteome</keyword>
<feature type="chain" id="PRO_0000403766" description="Tubulin polyglutamylase ttll-4">
    <location>
        <begin position="1"/>
        <end position="597"/>
    </location>
</feature>
<feature type="domain" description="TTL" evidence="3">
    <location>
        <begin position="134"/>
        <end position="472"/>
    </location>
</feature>
<feature type="region of interest" description="Disordered" evidence="4">
    <location>
        <begin position="1"/>
        <end position="39"/>
    </location>
</feature>
<feature type="region of interest" description="Disordered" evidence="4">
    <location>
        <begin position="80"/>
        <end position="107"/>
    </location>
</feature>
<feature type="compositionally biased region" description="Polar residues" evidence="4">
    <location>
        <begin position="1"/>
        <end position="18"/>
    </location>
</feature>
<feature type="compositionally biased region" description="Acidic residues" evidence="4">
    <location>
        <begin position="26"/>
        <end position="35"/>
    </location>
</feature>
<feature type="binding site" evidence="1">
    <location>
        <position position="250"/>
    </location>
    <ligand>
        <name>ATP</name>
        <dbReference type="ChEBI" id="CHEBI:30616"/>
    </ligand>
</feature>
<feature type="binding site" evidence="1">
    <location>
        <begin position="256"/>
        <end position="257"/>
    </location>
    <ligand>
        <name>ATP</name>
        <dbReference type="ChEBI" id="CHEBI:30616"/>
    </ligand>
</feature>
<feature type="binding site" evidence="1">
    <location>
        <position position="256"/>
    </location>
    <ligand>
        <name>a protein</name>
        <dbReference type="ChEBI" id="CHEBI:16541"/>
    </ligand>
    <ligandPart>
        <name>L-glutamate residue</name>
        <dbReference type="ChEBI" id="CHEBI:29973"/>
        <note>L-glutamate acceptor residue in protein target</note>
    </ligandPart>
</feature>
<feature type="binding site" evidence="1">
    <location>
        <begin position="278"/>
        <end position="281"/>
    </location>
    <ligand>
        <name>ATP</name>
        <dbReference type="ChEBI" id="CHEBI:30616"/>
    </ligand>
</feature>
<feature type="binding site" evidence="1">
    <location>
        <begin position="291"/>
        <end position="293"/>
    </location>
    <ligand>
        <name>ATP</name>
        <dbReference type="ChEBI" id="CHEBI:30616"/>
    </ligand>
</feature>
<feature type="binding site" evidence="1">
    <location>
        <position position="317"/>
    </location>
    <ligand>
        <name>L-glutamate</name>
        <dbReference type="ChEBI" id="CHEBI:29985"/>
    </ligand>
</feature>
<feature type="binding site" evidence="1">
    <location>
        <begin position="338"/>
        <end position="339"/>
    </location>
    <ligand>
        <name>ATP</name>
        <dbReference type="ChEBI" id="CHEBI:30616"/>
    </ligand>
</feature>
<feature type="binding site" evidence="1">
    <location>
        <position position="340"/>
    </location>
    <ligand>
        <name>L-glutamate</name>
        <dbReference type="ChEBI" id="CHEBI:29985"/>
    </ligand>
</feature>
<feature type="binding site" evidence="1">
    <location>
        <position position="341"/>
    </location>
    <ligand>
        <name>L-glutamate</name>
        <dbReference type="ChEBI" id="CHEBI:29985"/>
    </ligand>
</feature>
<feature type="binding site" evidence="1">
    <location>
        <position position="358"/>
    </location>
    <ligand>
        <name>L-glutamate</name>
        <dbReference type="ChEBI" id="CHEBI:29985"/>
    </ligand>
</feature>
<feature type="binding site" evidence="1">
    <location>
        <position position="418"/>
    </location>
    <ligand>
        <name>Mg(2+)</name>
        <dbReference type="ChEBI" id="CHEBI:18420"/>
        <label>1</label>
    </ligand>
</feature>
<feature type="binding site" evidence="1">
    <location>
        <position position="431"/>
    </location>
    <ligand>
        <name>Mg(2+)</name>
        <dbReference type="ChEBI" id="CHEBI:18420"/>
        <label>1</label>
    </ligand>
</feature>
<feature type="binding site" evidence="1">
    <location>
        <position position="431"/>
    </location>
    <ligand>
        <name>Mg(2+)</name>
        <dbReference type="ChEBI" id="CHEBI:18420"/>
        <label>2</label>
    </ligand>
</feature>
<feature type="binding site" evidence="1">
    <location>
        <position position="433"/>
    </location>
    <ligand>
        <name>Mg(2+)</name>
        <dbReference type="ChEBI" id="CHEBI:18420"/>
        <label>2</label>
    </ligand>
</feature>
<feature type="binding site" evidence="1">
    <location>
        <position position="449"/>
    </location>
    <ligand>
        <name>L-glutamate</name>
        <dbReference type="ChEBI" id="CHEBI:29985"/>
    </ligand>
</feature>
<feature type="site" description="Essential for specifying initiation versus elongation step of the polyglutamylase activity" evidence="1">
    <location>
        <position position="256"/>
    </location>
</feature>
<name>TTLL4_CAEBR</name>
<reference key="1">
    <citation type="journal article" date="2003" name="PLoS Biol.">
        <title>The genome sequence of Caenorhabditis briggsae: a platform for comparative genomics.</title>
        <authorList>
            <person name="Stein L.D."/>
            <person name="Bao Z."/>
            <person name="Blasiar D."/>
            <person name="Blumenthal T."/>
            <person name="Brent M.R."/>
            <person name="Chen N."/>
            <person name="Chinwalla A."/>
            <person name="Clarke L."/>
            <person name="Clee C."/>
            <person name="Coghlan A."/>
            <person name="Coulson A."/>
            <person name="D'Eustachio P."/>
            <person name="Fitch D.H.A."/>
            <person name="Fulton L.A."/>
            <person name="Fulton R.E."/>
            <person name="Griffiths-Jones S."/>
            <person name="Harris T.W."/>
            <person name="Hillier L.W."/>
            <person name="Kamath R."/>
            <person name="Kuwabara P.E."/>
            <person name="Mardis E.R."/>
            <person name="Marra M.A."/>
            <person name="Miner T.L."/>
            <person name="Minx P."/>
            <person name="Mullikin J.C."/>
            <person name="Plumb R.W."/>
            <person name="Rogers J."/>
            <person name="Schein J.E."/>
            <person name="Sohrmann M."/>
            <person name="Spieth J."/>
            <person name="Stajich J.E."/>
            <person name="Wei C."/>
            <person name="Willey D."/>
            <person name="Wilson R.K."/>
            <person name="Durbin R.M."/>
            <person name="Waterston R.H."/>
        </authorList>
    </citation>
    <scope>NUCLEOTIDE SEQUENCE [LARGE SCALE GENOMIC DNA]</scope>
    <source>
        <strain>AF16</strain>
    </source>
</reference>
<organism>
    <name type="scientific">Caenorhabditis briggsae</name>
    <dbReference type="NCBI Taxonomy" id="6238"/>
    <lineage>
        <taxon>Eukaryota</taxon>
        <taxon>Metazoa</taxon>
        <taxon>Ecdysozoa</taxon>
        <taxon>Nematoda</taxon>
        <taxon>Chromadorea</taxon>
        <taxon>Rhabditida</taxon>
        <taxon>Rhabditina</taxon>
        <taxon>Rhabditomorpha</taxon>
        <taxon>Rhabditoidea</taxon>
        <taxon>Rhabditidae</taxon>
        <taxon>Peloderinae</taxon>
        <taxon>Caenorhabditis</taxon>
    </lineage>
</organism>
<evidence type="ECO:0000250" key="1">
    <source>
        <dbReference type="UniProtKB" id="A4Q9E8"/>
    </source>
</evidence>
<evidence type="ECO:0000250" key="2">
    <source>
        <dbReference type="UniProtKB" id="Q09647"/>
    </source>
</evidence>
<evidence type="ECO:0000255" key="3">
    <source>
        <dbReference type="PROSITE-ProRule" id="PRU00568"/>
    </source>
</evidence>
<evidence type="ECO:0000256" key="4">
    <source>
        <dbReference type="SAM" id="MobiDB-lite"/>
    </source>
</evidence>
<evidence type="ECO:0000305" key="5"/>